<sequence>MTKKKAHKPGSATIALNKRARHEYFIEEEFEAGLALQGWEVKSLRAGKANISDSYVLLRDGEAFLFGANITPMAVASTHVVCDPTRTRKLLLNQRELDSLYGRVNREGYTVVALSLYWKNAWCKVKIGVAKGKKQHDKRSDIKEREWQVDKARIMKNAHR</sequence>
<protein>
    <recommendedName>
        <fullName evidence="1">SsrA-binding protein</fullName>
    </recommendedName>
    <alternativeName>
        <fullName evidence="1">Small protein B</fullName>
    </alternativeName>
</protein>
<organism>
    <name type="scientific">Shigella boydii serotype 18 (strain CDC 3083-94 / BS512)</name>
    <dbReference type="NCBI Taxonomy" id="344609"/>
    <lineage>
        <taxon>Bacteria</taxon>
        <taxon>Pseudomonadati</taxon>
        <taxon>Pseudomonadota</taxon>
        <taxon>Gammaproteobacteria</taxon>
        <taxon>Enterobacterales</taxon>
        <taxon>Enterobacteriaceae</taxon>
        <taxon>Shigella</taxon>
    </lineage>
</organism>
<comment type="function">
    <text evidence="1">Required for rescue of stalled ribosomes mediated by trans-translation. Binds to transfer-messenger RNA (tmRNA), required for stable association of tmRNA with ribosomes. tmRNA and SmpB together mimic tRNA shape, replacing the anticodon stem-loop with SmpB. tmRNA is encoded by the ssrA gene; the 2 termini fold to resemble tRNA(Ala) and it encodes a 'tag peptide', a short internal open reading frame. During trans-translation Ala-aminoacylated tmRNA acts like a tRNA, entering the A-site of stalled ribosomes, displacing the stalled mRNA. The ribosome then switches to translate the ORF on the tmRNA; the nascent peptide is terminated with the 'tag peptide' encoded by the tmRNA and targeted for degradation. The ribosome is freed to recommence translation, which seems to be the essential function of trans-translation.</text>
</comment>
<comment type="subcellular location">
    <subcellularLocation>
        <location evidence="1">Cytoplasm</location>
    </subcellularLocation>
    <text evidence="1">The tmRNA-SmpB complex associates with stalled 70S ribosomes.</text>
</comment>
<comment type="similarity">
    <text evidence="1">Belongs to the SmpB family.</text>
</comment>
<keyword id="KW-0963">Cytoplasm</keyword>
<keyword id="KW-1185">Reference proteome</keyword>
<keyword id="KW-0694">RNA-binding</keyword>
<feature type="chain" id="PRO_1000090187" description="SsrA-binding protein">
    <location>
        <begin position="1"/>
        <end position="160"/>
    </location>
</feature>
<reference key="1">
    <citation type="submission" date="2008-05" db="EMBL/GenBank/DDBJ databases">
        <title>Complete sequence of Shigella boydii serotype 18 strain BS512.</title>
        <authorList>
            <person name="Rasko D.A."/>
            <person name="Rosovitz M."/>
            <person name="Maurelli A.T."/>
            <person name="Myers G."/>
            <person name="Seshadri R."/>
            <person name="Cer R."/>
            <person name="Jiang L."/>
            <person name="Ravel J."/>
            <person name="Sebastian Y."/>
        </authorList>
    </citation>
    <scope>NUCLEOTIDE SEQUENCE [LARGE SCALE GENOMIC DNA]</scope>
    <source>
        <strain>CDC 3083-94 / BS512</strain>
    </source>
</reference>
<proteinExistence type="inferred from homology"/>
<gene>
    <name evidence="1" type="primary">smpB</name>
    <name type="ordered locus">SbBS512_E3009</name>
</gene>
<accession>B2TYP2</accession>
<evidence type="ECO:0000255" key="1">
    <source>
        <dbReference type="HAMAP-Rule" id="MF_00023"/>
    </source>
</evidence>
<name>SSRP_SHIB3</name>
<dbReference type="EMBL" id="CP001063">
    <property type="protein sequence ID" value="ACD08276.1"/>
    <property type="molecule type" value="Genomic_DNA"/>
</dbReference>
<dbReference type="RefSeq" id="WP_000162574.1">
    <property type="nucleotide sequence ID" value="NC_010658.1"/>
</dbReference>
<dbReference type="SMR" id="B2TYP2"/>
<dbReference type="STRING" id="344609.SbBS512_E3009"/>
<dbReference type="GeneID" id="93774470"/>
<dbReference type="KEGG" id="sbc:SbBS512_E3009"/>
<dbReference type="HOGENOM" id="CLU_108953_3_0_6"/>
<dbReference type="Proteomes" id="UP000001030">
    <property type="component" value="Chromosome"/>
</dbReference>
<dbReference type="GO" id="GO:0005829">
    <property type="term" value="C:cytosol"/>
    <property type="evidence" value="ECO:0007669"/>
    <property type="project" value="TreeGrafter"/>
</dbReference>
<dbReference type="GO" id="GO:0003723">
    <property type="term" value="F:RNA binding"/>
    <property type="evidence" value="ECO:0007669"/>
    <property type="project" value="UniProtKB-UniRule"/>
</dbReference>
<dbReference type="GO" id="GO:0070929">
    <property type="term" value="P:trans-translation"/>
    <property type="evidence" value="ECO:0007669"/>
    <property type="project" value="UniProtKB-UniRule"/>
</dbReference>
<dbReference type="CDD" id="cd09294">
    <property type="entry name" value="SmpB"/>
    <property type="match status" value="1"/>
</dbReference>
<dbReference type="FunFam" id="2.40.280.10:FF:000001">
    <property type="entry name" value="SsrA-binding protein"/>
    <property type="match status" value="1"/>
</dbReference>
<dbReference type="Gene3D" id="2.40.280.10">
    <property type="match status" value="1"/>
</dbReference>
<dbReference type="HAMAP" id="MF_00023">
    <property type="entry name" value="SmpB"/>
    <property type="match status" value="1"/>
</dbReference>
<dbReference type="InterPro" id="IPR023620">
    <property type="entry name" value="SmpB"/>
</dbReference>
<dbReference type="InterPro" id="IPR000037">
    <property type="entry name" value="SsrA-bd_prot"/>
</dbReference>
<dbReference type="InterPro" id="IPR020081">
    <property type="entry name" value="SsrA-bd_prot_CS"/>
</dbReference>
<dbReference type="NCBIfam" id="NF003843">
    <property type="entry name" value="PRK05422.1"/>
    <property type="match status" value="1"/>
</dbReference>
<dbReference type="NCBIfam" id="TIGR00086">
    <property type="entry name" value="smpB"/>
    <property type="match status" value="1"/>
</dbReference>
<dbReference type="PANTHER" id="PTHR30308:SF2">
    <property type="entry name" value="SSRA-BINDING PROTEIN"/>
    <property type="match status" value="1"/>
</dbReference>
<dbReference type="PANTHER" id="PTHR30308">
    <property type="entry name" value="TMRNA-BINDING COMPONENT OF TRANS-TRANSLATION TAGGING COMPLEX"/>
    <property type="match status" value="1"/>
</dbReference>
<dbReference type="Pfam" id="PF01668">
    <property type="entry name" value="SmpB"/>
    <property type="match status" value="1"/>
</dbReference>
<dbReference type="SUPFAM" id="SSF74982">
    <property type="entry name" value="Small protein B (SmpB)"/>
    <property type="match status" value="1"/>
</dbReference>
<dbReference type="PROSITE" id="PS01317">
    <property type="entry name" value="SSRP"/>
    <property type="match status" value="1"/>
</dbReference>